<organism>
    <name type="scientific">Sulfurovum sp. (strain NBC37-1)</name>
    <dbReference type="NCBI Taxonomy" id="387093"/>
    <lineage>
        <taxon>Bacteria</taxon>
        <taxon>Pseudomonadati</taxon>
        <taxon>Campylobacterota</taxon>
        <taxon>Epsilonproteobacteria</taxon>
        <taxon>Campylobacterales</taxon>
        <taxon>Sulfurovaceae</taxon>
        <taxon>Sulfurovum</taxon>
    </lineage>
</organism>
<protein>
    <recommendedName>
        <fullName evidence="1">ATP phosphoribosyltransferase</fullName>
        <shortName evidence="1">ATP-PRT</shortName>
        <shortName evidence="1">ATP-PRTase</shortName>
        <ecNumber evidence="1">2.4.2.17</ecNumber>
    </recommendedName>
</protein>
<gene>
    <name evidence="1" type="primary">hisG</name>
    <name type="ordered locus">SUN_0424</name>
</gene>
<accession>A6Q7C5</accession>
<sequence>MLTVALPKGRIAEQTLEIFAEIFGGEFKFEGRELIMEKEGFKFLNVRNQDVPTYVEHGAADIGVVGLDVITEKELDIIQLLDMQLGKCKVAIGIKNEDELDWNRPNIKVATKMVNIAKNYFAQKAVGVEVVKLYGSIELAPLVGLADAIVDIVETGNTMRENGLKVAEDIMDSSAHLIANKNSFYGKKEEILSLYEKIKAVVESRG</sequence>
<evidence type="ECO:0000255" key="1">
    <source>
        <dbReference type="HAMAP-Rule" id="MF_01018"/>
    </source>
</evidence>
<reference key="1">
    <citation type="journal article" date="2007" name="Proc. Natl. Acad. Sci. U.S.A.">
        <title>Deep-sea vent epsilon-proteobacterial genomes provide insights into emergence of pathogens.</title>
        <authorList>
            <person name="Nakagawa S."/>
            <person name="Takaki Y."/>
            <person name="Shimamura S."/>
            <person name="Reysenbach A.-L."/>
            <person name="Takai K."/>
            <person name="Horikoshi K."/>
        </authorList>
    </citation>
    <scope>NUCLEOTIDE SEQUENCE [LARGE SCALE GENOMIC DNA]</scope>
    <source>
        <strain>NBC37-1</strain>
    </source>
</reference>
<comment type="function">
    <text evidence="1">Catalyzes the condensation of ATP and 5-phosphoribose 1-diphosphate to form N'-(5'-phosphoribosyl)-ATP (PR-ATP). Has a crucial role in the pathway because the rate of histidine biosynthesis seems to be controlled primarily by regulation of HisG enzymatic activity.</text>
</comment>
<comment type="catalytic activity">
    <reaction evidence="1">
        <text>1-(5-phospho-beta-D-ribosyl)-ATP + diphosphate = 5-phospho-alpha-D-ribose 1-diphosphate + ATP</text>
        <dbReference type="Rhea" id="RHEA:18473"/>
        <dbReference type="ChEBI" id="CHEBI:30616"/>
        <dbReference type="ChEBI" id="CHEBI:33019"/>
        <dbReference type="ChEBI" id="CHEBI:58017"/>
        <dbReference type="ChEBI" id="CHEBI:73183"/>
        <dbReference type="EC" id="2.4.2.17"/>
    </reaction>
</comment>
<comment type="pathway">
    <text evidence="1">Amino-acid biosynthesis; L-histidine biosynthesis; L-histidine from 5-phospho-alpha-D-ribose 1-diphosphate: step 1/9.</text>
</comment>
<comment type="subunit">
    <text evidence="1">Heteromultimer composed of HisG and HisZ subunits.</text>
</comment>
<comment type="subcellular location">
    <subcellularLocation>
        <location evidence="1">Cytoplasm</location>
    </subcellularLocation>
</comment>
<comment type="domain">
    <text>Lacks the C-terminal regulatory region which is replaced by HisZ.</text>
</comment>
<comment type="similarity">
    <text evidence="1">Belongs to the ATP phosphoribosyltransferase family. Short subfamily.</text>
</comment>
<proteinExistence type="inferred from homology"/>
<keyword id="KW-0028">Amino-acid biosynthesis</keyword>
<keyword id="KW-0067">ATP-binding</keyword>
<keyword id="KW-0963">Cytoplasm</keyword>
<keyword id="KW-0328">Glycosyltransferase</keyword>
<keyword id="KW-0368">Histidine biosynthesis</keyword>
<keyword id="KW-0547">Nucleotide-binding</keyword>
<keyword id="KW-0808">Transferase</keyword>
<dbReference type="EC" id="2.4.2.17" evidence="1"/>
<dbReference type="EMBL" id="AP009179">
    <property type="protein sequence ID" value="BAF71384.1"/>
    <property type="molecule type" value="Genomic_DNA"/>
</dbReference>
<dbReference type="RefSeq" id="WP_011980117.1">
    <property type="nucleotide sequence ID" value="NC_009663.1"/>
</dbReference>
<dbReference type="SMR" id="A6Q7C5"/>
<dbReference type="STRING" id="387093.SUN_0424"/>
<dbReference type="KEGG" id="sun:SUN_0424"/>
<dbReference type="eggNOG" id="COG0040">
    <property type="taxonomic scope" value="Bacteria"/>
</dbReference>
<dbReference type="HOGENOM" id="CLU_038115_2_0_7"/>
<dbReference type="OrthoDB" id="9801867at2"/>
<dbReference type="UniPathway" id="UPA00031">
    <property type="reaction ID" value="UER00006"/>
</dbReference>
<dbReference type="Proteomes" id="UP000006378">
    <property type="component" value="Chromosome"/>
</dbReference>
<dbReference type="GO" id="GO:0005737">
    <property type="term" value="C:cytoplasm"/>
    <property type="evidence" value="ECO:0007669"/>
    <property type="project" value="UniProtKB-SubCell"/>
</dbReference>
<dbReference type="GO" id="GO:0005524">
    <property type="term" value="F:ATP binding"/>
    <property type="evidence" value="ECO:0007669"/>
    <property type="project" value="UniProtKB-KW"/>
</dbReference>
<dbReference type="GO" id="GO:0003879">
    <property type="term" value="F:ATP phosphoribosyltransferase activity"/>
    <property type="evidence" value="ECO:0007669"/>
    <property type="project" value="UniProtKB-UniRule"/>
</dbReference>
<dbReference type="GO" id="GO:0000105">
    <property type="term" value="P:L-histidine biosynthetic process"/>
    <property type="evidence" value="ECO:0007669"/>
    <property type="project" value="UniProtKB-UniRule"/>
</dbReference>
<dbReference type="CDD" id="cd13595">
    <property type="entry name" value="PBP2_HisGs"/>
    <property type="match status" value="1"/>
</dbReference>
<dbReference type="FunFam" id="3.40.190.10:FF:000008">
    <property type="entry name" value="ATP phosphoribosyltransferase"/>
    <property type="match status" value="1"/>
</dbReference>
<dbReference type="Gene3D" id="3.40.190.10">
    <property type="entry name" value="Periplasmic binding protein-like II"/>
    <property type="match status" value="2"/>
</dbReference>
<dbReference type="HAMAP" id="MF_01018">
    <property type="entry name" value="HisG_Short"/>
    <property type="match status" value="1"/>
</dbReference>
<dbReference type="InterPro" id="IPR013820">
    <property type="entry name" value="ATP_PRibTrfase_cat"/>
</dbReference>
<dbReference type="InterPro" id="IPR018198">
    <property type="entry name" value="ATP_PRibTrfase_CS"/>
</dbReference>
<dbReference type="InterPro" id="IPR001348">
    <property type="entry name" value="ATP_PRibTrfase_HisG"/>
</dbReference>
<dbReference type="InterPro" id="IPR024893">
    <property type="entry name" value="ATP_PRibTrfase_HisG_short"/>
</dbReference>
<dbReference type="NCBIfam" id="TIGR00070">
    <property type="entry name" value="hisG"/>
    <property type="match status" value="1"/>
</dbReference>
<dbReference type="PANTHER" id="PTHR21403:SF8">
    <property type="entry name" value="ATP PHOSPHORIBOSYLTRANSFERASE"/>
    <property type="match status" value="1"/>
</dbReference>
<dbReference type="PANTHER" id="PTHR21403">
    <property type="entry name" value="ATP PHOSPHORIBOSYLTRANSFERASE ATP-PRTASE"/>
    <property type="match status" value="1"/>
</dbReference>
<dbReference type="Pfam" id="PF01634">
    <property type="entry name" value="HisG"/>
    <property type="match status" value="1"/>
</dbReference>
<dbReference type="SUPFAM" id="SSF53850">
    <property type="entry name" value="Periplasmic binding protein-like II"/>
    <property type="match status" value="1"/>
</dbReference>
<dbReference type="PROSITE" id="PS01316">
    <property type="entry name" value="ATP_P_PHORIBOSYLTR"/>
    <property type="match status" value="1"/>
</dbReference>
<feature type="chain" id="PRO_1000063312" description="ATP phosphoribosyltransferase">
    <location>
        <begin position="1"/>
        <end position="206"/>
    </location>
</feature>
<name>HIS1_SULNB</name>